<accession>Q31EE3</accession>
<evidence type="ECO:0000255" key="1">
    <source>
        <dbReference type="HAMAP-Rule" id="MF_00386"/>
    </source>
</evidence>
<evidence type="ECO:0000256" key="2">
    <source>
        <dbReference type="SAM" id="MobiDB-lite"/>
    </source>
</evidence>
<keyword id="KW-0997">Cell inner membrane</keyword>
<keyword id="KW-1003">Cell membrane</keyword>
<keyword id="KW-0472">Membrane</keyword>
<feature type="chain" id="PRO_0000253196" description="Putative membrane protein insertion efficiency factor">
    <location>
        <begin position="1"/>
        <end position="91"/>
    </location>
</feature>
<feature type="region of interest" description="Disordered" evidence="2">
    <location>
        <begin position="66"/>
        <end position="91"/>
    </location>
</feature>
<feature type="compositionally biased region" description="Basic and acidic residues" evidence="2">
    <location>
        <begin position="77"/>
        <end position="91"/>
    </location>
</feature>
<name>YIDD_HYDCU</name>
<proteinExistence type="inferred from homology"/>
<sequence>MNPFKWLIILPVRFYQLFISPILGPRCRFYPTCSHYTIEAVQQHGVFCGLWLAIKRIAKCHPGNPGGVDPVPSCGCHSDKETTPKEKSDNA</sequence>
<organism>
    <name type="scientific">Hydrogenovibrio crunogenus (strain DSM 25203 / XCL-2)</name>
    <name type="common">Thiomicrospira crunogena</name>
    <dbReference type="NCBI Taxonomy" id="317025"/>
    <lineage>
        <taxon>Bacteria</taxon>
        <taxon>Pseudomonadati</taxon>
        <taxon>Pseudomonadota</taxon>
        <taxon>Gammaproteobacteria</taxon>
        <taxon>Thiotrichales</taxon>
        <taxon>Piscirickettsiaceae</taxon>
        <taxon>Hydrogenovibrio</taxon>
    </lineage>
</organism>
<dbReference type="EMBL" id="CP000109">
    <property type="protein sequence ID" value="ABB42480.1"/>
    <property type="molecule type" value="Genomic_DNA"/>
</dbReference>
<dbReference type="STRING" id="317025.Tcr_1890"/>
<dbReference type="KEGG" id="tcx:Tcr_1890"/>
<dbReference type="eggNOG" id="COG0759">
    <property type="taxonomic scope" value="Bacteria"/>
</dbReference>
<dbReference type="HOGENOM" id="CLU_144811_5_2_6"/>
<dbReference type="OrthoDB" id="9801753at2"/>
<dbReference type="GO" id="GO:0005886">
    <property type="term" value="C:plasma membrane"/>
    <property type="evidence" value="ECO:0007669"/>
    <property type="project" value="UniProtKB-SubCell"/>
</dbReference>
<dbReference type="HAMAP" id="MF_00386">
    <property type="entry name" value="UPF0161_YidD"/>
    <property type="match status" value="1"/>
</dbReference>
<dbReference type="InterPro" id="IPR002696">
    <property type="entry name" value="Membr_insert_effic_factor_YidD"/>
</dbReference>
<dbReference type="NCBIfam" id="TIGR00278">
    <property type="entry name" value="membrane protein insertion efficiency factor YidD"/>
    <property type="match status" value="1"/>
</dbReference>
<dbReference type="PANTHER" id="PTHR33383">
    <property type="entry name" value="MEMBRANE PROTEIN INSERTION EFFICIENCY FACTOR-RELATED"/>
    <property type="match status" value="1"/>
</dbReference>
<dbReference type="PANTHER" id="PTHR33383:SF1">
    <property type="entry name" value="MEMBRANE PROTEIN INSERTION EFFICIENCY FACTOR-RELATED"/>
    <property type="match status" value="1"/>
</dbReference>
<dbReference type="Pfam" id="PF01809">
    <property type="entry name" value="YidD"/>
    <property type="match status" value="1"/>
</dbReference>
<dbReference type="SMART" id="SM01234">
    <property type="entry name" value="Haemolytic"/>
    <property type="match status" value="1"/>
</dbReference>
<protein>
    <recommendedName>
        <fullName evidence="1">Putative membrane protein insertion efficiency factor</fullName>
    </recommendedName>
</protein>
<comment type="function">
    <text evidence="1">Could be involved in insertion of integral membrane proteins into the membrane.</text>
</comment>
<comment type="subcellular location">
    <subcellularLocation>
        <location evidence="1">Cell inner membrane</location>
        <topology evidence="1">Peripheral membrane protein</topology>
        <orientation evidence="1">Cytoplasmic side</orientation>
    </subcellularLocation>
</comment>
<comment type="similarity">
    <text evidence="1">Belongs to the UPF0161 family.</text>
</comment>
<reference key="1">
    <citation type="journal article" date="2006" name="PLoS Biol.">
        <title>The genome of deep-sea vent chemolithoautotroph Thiomicrospira crunogena XCL-2.</title>
        <authorList>
            <person name="Scott K.M."/>
            <person name="Sievert S.M."/>
            <person name="Abril F.N."/>
            <person name="Ball L.A."/>
            <person name="Barrett C.J."/>
            <person name="Blake R.A."/>
            <person name="Boller A.J."/>
            <person name="Chain P.S.G."/>
            <person name="Clark J.A."/>
            <person name="Davis C.R."/>
            <person name="Detter C."/>
            <person name="Do K.F."/>
            <person name="Dobrinski K.P."/>
            <person name="Faza B.I."/>
            <person name="Fitzpatrick K.A."/>
            <person name="Freyermuth S.K."/>
            <person name="Harmer T.L."/>
            <person name="Hauser L.J."/>
            <person name="Huegler M."/>
            <person name="Kerfeld C.A."/>
            <person name="Klotz M.G."/>
            <person name="Kong W.W."/>
            <person name="Land M."/>
            <person name="Lapidus A."/>
            <person name="Larimer F.W."/>
            <person name="Longo D.L."/>
            <person name="Lucas S."/>
            <person name="Malfatti S.A."/>
            <person name="Massey S.E."/>
            <person name="Martin D.D."/>
            <person name="McCuddin Z."/>
            <person name="Meyer F."/>
            <person name="Moore J.L."/>
            <person name="Ocampo L.H. Jr."/>
            <person name="Paul J.H."/>
            <person name="Paulsen I.T."/>
            <person name="Reep D.K."/>
            <person name="Ren Q."/>
            <person name="Ross R.L."/>
            <person name="Sato P.Y."/>
            <person name="Thomas P."/>
            <person name="Tinkham L.E."/>
            <person name="Zeruth G.T."/>
        </authorList>
    </citation>
    <scope>NUCLEOTIDE SEQUENCE [LARGE SCALE GENOMIC DNA]</scope>
    <source>
        <strain>DSM 25203 / XCL-2</strain>
    </source>
</reference>
<gene>
    <name type="ordered locus">Tcr_1890</name>
</gene>